<reference key="1">
    <citation type="journal article" date="2002" name="J. Appl. Microbiol.">
        <title>Acid stress in the food pathogen Bacillus cereus.</title>
        <authorList>
            <person name="Browne N."/>
            <person name="Dowds B.C.A."/>
        </authorList>
    </citation>
    <scope>PROTEIN SEQUENCE</scope>
    <source>
        <strain>DSM 626 / NCIMB 11796 / T</strain>
    </source>
</reference>
<evidence type="ECO:0000250" key="1"/>
<evidence type="ECO:0000305" key="2"/>
<keyword id="KW-0903">Direct protein sequencing</keyword>
<keyword id="KW-0687">Ribonucleoprotein</keyword>
<keyword id="KW-0689">Ribosomal protein</keyword>
<keyword id="KW-0694">RNA-binding</keyword>
<keyword id="KW-0699">rRNA-binding</keyword>
<keyword id="KW-0820">tRNA-binding</keyword>
<feature type="chain" id="PRO_0000271258" description="Large ribosomal subunit protein uL5">
    <location>
        <begin position="1"/>
        <end position="20" status="greater than"/>
    </location>
</feature>
<feature type="non-terminal residue">
    <location>
        <position position="20"/>
    </location>
</feature>
<organism>
    <name type="scientific">Bacillus cereus</name>
    <dbReference type="NCBI Taxonomy" id="1396"/>
    <lineage>
        <taxon>Bacteria</taxon>
        <taxon>Bacillati</taxon>
        <taxon>Bacillota</taxon>
        <taxon>Bacilli</taxon>
        <taxon>Bacillales</taxon>
        <taxon>Bacillaceae</taxon>
        <taxon>Bacillus</taxon>
        <taxon>Bacillus cereus group</taxon>
    </lineage>
</organism>
<sequence length="20" mass="2393">MNRLKEIFQKEITPALVSKF</sequence>
<protein>
    <recommendedName>
        <fullName evidence="2">Large ribosomal subunit protein uL5</fullName>
    </recommendedName>
    <alternativeName>
        <fullName>50S ribosomal protein L5</fullName>
    </alternativeName>
</protein>
<name>RL5_BACCE</name>
<dbReference type="eggNOG" id="COG0094">
    <property type="taxonomic scope" value="Bacteria"/>
</dbReference>
<dbReference type="GO" id="GO:1990904">
    <property type="term" value="C:ribonucleoprotein complex"/>
    <property type="evidence" value="ECO:0007669"/>
    <property type="project" value="UniProtKB-KW"/>
</dbReference>
<dbReference type="GO" id="GO:0005840">
    <property type="term" value="C:ribosome"/>
    <property type="evidence" value="ECO:0007669"/>
    <property type="project" value="UniProtKB-KW"/>
</dbReference>
<dbReference type="GO" id="GO:0019843">
    <property type="term" value="F:rRNA binding"/>
    <property type="evidence" value="ECO:0007669"/>
    <property type="project" value="UniProtKB-KW"/>
</dbReference>
<dbReference type="GO" id="GO:0000049">
    <property type="term" value="F:tRNA binding"/>
    <property type="evidence" value="ECO:0007669"/>
    <property type="project" value="UniProtKB-KW"/>
</dbReference>
<comment type="function">
    <text evidence="1">This is one of the proteins that bind and probably mediate the attachment of the 5S RNA into the large ribosomal subunit, where it forms part of the central protuberance. In the 70S ribosome it contacts protein S13 of the 30S subunit (bridge B1b), connecting the two subunits; this bridge is implicated in subunit movement. Contacts the P site tRNA; the 5S rRNA and some of its associated proteins might help stabilize positioning of ribosome-bound tRNAs (By similarity).</text>
</comment>
<comment type="subunit">
    <text evidence="1">Part of the 50S ribosomal subunit; part of the 5S rRNA/L5/L18/L25 subcomplex. Contacts the 5S rRNA and the P site tRNA. Forms a bridge to the 30S subunit in the 70S ribosome (By similarity).</text>
</comment>
<comment type="miscellaneous">
    <text>Under acid-stress, this protein is expressed at a higher level in wild-type B.cereus than in the acid-sensitive mutant strain NB1.</text>
</comment>
<comment type="similarity">
    <text evidence="2">Belongs to the universal ribosomal protein uL5 family.</text>
</comment>
<accession>P83065</accession>
<proteinExistence type="evidence at protein level"/>
<gene>
    <name type="primary">rplE</name>
</gene>